<accession>A4QKA0</accession>
<dbReference type="EC" id="1.10.3.9" evidence="2"/>
<dbReference type="EMBL" id="AP009370">
    <property type="protein sequence ID" value="BAF50105.1"/>
    <property type="molecule type" value="Genomic_DNA"/>
</dbReference>
<dbReference type="RefSeq" id="YP_001123281.1">
    <property type="nucleotide sequence ID" value="NC_009269.1"/>
</dbReference>
<dbReference type="SMR" id="A4QKA0"/>
<dbReference type="GeneID" id="4961942"/>
<dbReference type="GO" id="GO:0009535">
    <property type="term" value="C:chloroplast thylakoid membrane"/>
    <property type="evidence" value="ECO:0007669"/>
    <property type="project" value="UniProtKB-SubCell"/>
</dbReference>
<dbReference type="GO" id="GO:0009523">
    <property type="term" value="C:photosystem II"/>
    <property type="evidence" value="ECO:0007669"/>
    <property type="project" value="UniProtKB-KW"/>
</dbReference>
<dbReference type="GO" id="GO:0016168">
    <property type="term" value="F:chlorophyll binding"/>
    <property type="evidence" value="ECO:0007669"/>
    <property type="project" value="UniProtKB-UniRule"/>
</dbReference>
<dbReference type="GO" id="GO:0045156">
    <property type="term" value="F:electron transporter, transferring electrons within the cyclic electron transport pathway of photosynthesis activity"/>
    <property type="evidence" value="ECO:0007669"/>
    <property type="project" value="InterPro"/>
</dbReference>
<dbReference type="GO" id="GO:0005506">
    <property type="term" value="F:iron ion binding"/>
    <property type="evidence" value="ECO:0007669"/>
    <property type="project" value="UniProtKB-UniRule"/>
</dbReference>
<dbReference type="GO" id="GO:0010242">
    <property type="term" value="F:oxygen evolving activity"/>
    <property type="evidence" value="ECO:0007669"/>
    <property type="project" value="UniProtKB-EC"/>
</dbReference>
<dbReference type="GO" id="GO:0009772">
    <property type="term" value="P:photosynthetic electron transport in photosystem II"/>
    <property type="evidence" value="ECO:0007669"/>
    <property type="project" value="InterPro"/>
</dbReference>
<dbReference type="CDD" id="cd09288">
    <property type="entry name" value="Photosystem-II_D2"/>
    <property type="match status" value="1"/>
</dbReference>
<dbReference type="FunFam" id="1.20.85.10:FF:000001">
    <property type="entry name" value="photosystem II D2 protein-like"/>
    <property type="match status" value="1"/>
</dbReference>
<dbReference type="Gene3D" id="1.20.85.10">
    <property type="entry name" value="Photosystem II protein D1-like"/>
    <property type="match status" value="1"/>
</dbReference>
<dbReference type="HAMAP" id="MF_01383">
    <property type="entry name" value="PSII_PsbD_D2"/>
    <property type="match status" value="1"/>
</dbReference>
<dbReference type="InterPro" id="IPR055266">
    <property type="entry name" value="D1/D2"/>
</dbReference>
<dbReference type="InterPro" id="IPR036854">
    <property type="entry name" value="Photo_II_D1/D2_sf"/>
</dbReference>
<dbReference type="InterPro" id="IPR000484">
    <property type="entry name" value="Photo_RC_L/M"/>
</dbReference>
<dbReference type="InterPro" id="IPR055265">
    <property type="entry name" value="Photo_RC_L/M_CS"/>
</dbReference>
<dbReference type="InterPro" id="IPR005868">
    <property type="entry name" value="PSII_PsbD/D2"/>
</dbReference>
<dbReference type="NCBIfam" id="TIGR01152">
    <property type="entry name" value="psbD"/>
    <property type="match status" value="1"/>
</dbReference>
<dbReference type="PANTHER" id="PTHR33149:SF57">
    <property type="entry name" value="PHOTOSYSTEM II D2 PROTEIN"/>
    <property type="match status" value="1"/>
</dbReference>
<dbReference type="PANTHER" id="PTHR33149">
    <property type="entry name" value="PHOTOSYSTEM II PROTEIN D1"/>
    <property type="match status" value="1"/>
</dbReference>
<dbReference type="Pfam" id="PF00124">
    <property type="entry name" value="Photo_RC"/>
    <property type="match status" value="1"/>
</dbReference>
<dbReference type="PRINTS" id="PR00256">
    <property type="entry name" value="REACTNCENTRE"/>
</dbReference>
<dbReference type="SUPFAM" id="SSF81483">
    <property type="entry name" value="Bacterial photosystem II reaction centre, L and M subunits"/>
    <property type="match status" value="1"/>
</dbReference>
<dbReference type="PROSITE" id="PS00244">
    <property type="entry name" value="REACTION_CENTER"/>
    <property type="match status" value="1"/>
</dbReference>
<geneLocation type="chloroplast"/>
<feature type="initiator methionine" description="Removed" evidence="1">
    <location>
        <position position="1"/>
    </location>
</feature>
<feature type="chain" id="PRO_0000359624" description="Photosystem II D2 protein">
    <location>
        <begin position="2"/>
        <end position="353"/>
    </location>
</feature>
<feature type="transmembrane region" description="Helical" evidence="2">
    <location>
        <begin position="41"/>
        <end position="61"/>
    </location>
</feature>
<feature type="transmembrane region" description="Helical" evidence="2">
    <location>
        <begin position="125"/>
        <end position="141"/>
    </location>
</feature>
<feature type="transmembrane region" description="Helical" evidence="2">
    <location>
        <begin position="153"/>
        <end position="166"/>
    </location>
</feature>
<feature type="transmembrane region" description="Helical" evidence="2">
    <location>
        <begin position="208"/>
        <end position="228"/>
    </location>
</feature>
<feature type="transmembrane region" description="Helical" evidence="2">
    <location>
        <begin position="279"/>
        <end position="295"/>
    </location>
</feature>
<feature type="binding site" description="axial binding residue" evidence="2">
    <location>
        <position position="118"/>
    </location>
    <ligand>
        <name>chlorophyll a</name>
        <dbReference type="ChEBI" id="CHEBI:58416"/>
        <label>ChlzD2</label>
    </ligand>
    <ligandPart>
        <name>Mg</name>
        <dbReference type="ChEBI" id="CHEBI:25107"/>
    </ligandPart>
</feature>
<feature type="binding site" evidence="2">
    <location>
        <position position="130"/>
    </location>
    <ligand>
        <name>pheophytin a</name>
        <dbReference type="ChEBI" id="CHEBI:136840"/>
        <label>D2</label>
    </ligand>
</feature>
<feature type="binding site" evidence="2">
    <location>
        <position position="143"/>
    </location>
    <ligand>
        <name>pheophytin a</name>
        <dbReference type="ChEBI" id="CHEBI:136840"/>
        <label>D2</label>
    </ligand>
</feature>
<feature type="binding site" description="axial binding residue" evidence="2">
    <location>
        <position position="198"/>
    </location>
    <ligand>
        <name>chlorophyll a</name>
        <dbReference type="ChEBI" id="CHEBI:58416"/>
        <label>PD2</label>
    </ligand>
    <ligandPart>
        <name>Mg</name>
        <dbReference type="ChEBI" id="CHEBI:25107"/>
    </ligandPart>
</feature>
<feature type="binding site" evidence="2">
    <location>
        <position position="215"/>
    </location>
    <ligand>
        <name>a plastoquinone</name>
        <dbReference type="ChEBI" id="CHEBI:17757"/>
        <label>Q(A)</label>
    </ligand>
</feature>
<feature type="binding site" evidence="2">
    <location>
        <position position="215"/>
    </location>
    <ligand>
        <name>Fe cation</name>
        <dbReference type="ChEBI" id="CHEBI:24875"/>
        <note>ligand shared with heterodimeric partner</note>
    </ligand>
</feature>
<feature type="binding site" evidence="2">
    <location>
        <position position="262"/>
    </location>
    <ligand>
        <name>a plastoquinone</name>
        <dbReference type="ChEBI" id="CHEBI:17757"/>
        <label>Q(A)</label>
    </ligand>
</feature>
<feature type="binding site" evidence="2">
    <location>
        <position position="269"/>
    </location>
    <ligand>
        <name>Fe cation</name>
        <dbReference type="ChEBI" id="CHEBI:24875"/>
        <note>ligand shared with heterodimeric partner</note>
    </ligand>
</feature>
<feature type="modified residue" description="N-acetylthreonine" evidence="1">
    <location>
        <position position="2"/>
    </location>
</feature>
<feature type="modified residue" description="Phosphothreonine" evidence="1">
    <location>
        <position position="2"/>
    </location>
</feature>
<protein>
    <recommendedName>
        <fullName evidence="2">Photosystem II D2 protein</fullName>
        <shortName evidence="2">PSII D2 protein</shortName>
        <ecNumber evidence="2">1.10.3.9</ecNumber>
    </recommendedName>
    <alternativeName>
        <fullName evidence="2">Photosystem Q(A) protein</fullName>
    </alternativeName>
</protein>
<gene>
    <name evidence="2" type="primary">psbD</name>
</gene>
<evidence type="ECO:0000250" key="1">
    <source>
        <dbReference type="UniProtKB" id="P56761"/>
    </source>
</evidence>
<evidence type="ECO:0000255" key="2">
    <source>
        <dbReference type="HAMAP-Rule" id="MF_01383"/>
    </source>
</evidence>
<comment type="function">
    <text evidence="2">Photosystem II (PSII) is a light-driven water:plastoquinone oxidoreductase that uses light energy to abstract electrons from H(2)O, generating O(2) and a proton gradient subsequently used for ATP formation. It consists of a core antenna complex that captures photons, and an electron transfer chain that converts photonic excitation into a charge separation. The D1/D2 (PsbA/PsbD) reaction center heterodimer binds P680, the primary electron donor of PSII as well as several subsequent electron acceptors. D2 is needed for assembly of a stable PSII complex.</text>
</comment>
<comment type="catalytic activity">
    <reaction evidence="2">
        <text>2 a plastoquinone + 4 hnu + 2 H2O = 2 a plastoquinol + O2</text>
        <dbReference type="Rhea" id="RHEA:36359"/>
        <dbReference type="Rhea" id="RHEA-COMP:9561"/>
        <dbReference type="Rhea" id="RHEA-COMP:9562"/>
        <dbReference type="ChEBI" id="CHEBI:15377"/>
        <dbReference type="ChEBI" id="CHEBI:15379"/>
        <dbReference type="ChEBI" id="CHEBI:17757"/>
        <dbReference type="ChEBI" id="CHEBI:30212"/>
        <dbReference type="ChEBI" id="CHEBI:62192"/>
        <dbReference type="EC" id="1.10.3.9"/>
    </reaction>
</comment>
<comment type="cofactor">
    <text evidence="2">The D1/D2 heterodimer binds P680, chlorophylls that are the primary electron donor of PSII, and subsequent electron acceptors. It shares a non-heme iron and each subunit binds pheophytin, quinone, additional chlorophylls, carotenoids and lipids. There is also a Cl(-1) ion associated with D1 and D2, which is required for oxygen evolution. The PSII complex binds additional chlorophylls, carotenoids and specific lipids.</text>
</comment>
<comment type="subunit">
    <text evidence="2">PSII is composed of 1 copy each of membrane proteins PsbA, PsbB, PsbC, PsbD, PsbE, PsbF, PsbH, PsbI, PsbJ, PsbK, PsbL, PsbM, PsbT, PsbX, PsbY, PsbZ, Psb30/Ycf12, at least 3 peripheral proteins of the oxygen-evolving complex and a large number of cofactors. It forms dimeric complexes.</text>
</comment>
<comment type="subcellular location">
    <subcellularLocation>
        <location evidence="2">Plastid</location>
        <location evidence="2">Chloroplast thylakoid membrane</location>
        <topology evidence="2">Multi-pass membrane protein</topology>
    </subcellularLocation>
</comment>
<comment type="miscellaneous">
    <text evidence="2">2 of the reaction center chlorophylls (ChlD1 and ChlD2) are entirely coordinated by water.</text>
</comment>
<comment type="similarity">
    <text evidence="2">Belongs to the reaction center PufL/M/PsbA/D family.</text>
</comment>
<organism>
    <name type="scientific">Barbarea verna</name>
    <name type="common">Land cress</name>
    <name type="synonym">Erysimum vernum</name>
    <dbReference type="NCBI Taxonomy" id="50458"/>
    <lineage>
        <taxon>Eukaryota</taxon>
        <taxon>Viridiplantae</taxon>
        <taxon>Streptophyta</taxon>
        <taxon>Embryophyta</taxon>
        <taxon>Tracheophyta</taxon>
        <taxon>Spermatophyta</taxon>
        <taxon>Magnoliopsida</taxon>
        <taxon>eudicotyledons</taxon>
        <taxon>Gunneridae</taxon>
        <taxon>Pentapetalae</taxon>
        <taxon>rosids</taxon>
        <taxon>malvids</taxon>
        <taxon>Brassicales</taxon>
        <taxon>Brassicaceae</taxon>
        <taxon>Cardamineae</taxon>
        <taxon>Barbarea</taxon>
    </lineage>
</organism>
<keyword id="KW-0007">Acetylation</keyword>
<keyword id="KW-0148">Chlorophyll</keyword>
<keyword id="KW-0150">Chloroplast</keyword>
<keyword id="KW-0157">Chromophore</keyword>
<keyword id="KW-0249">Electron transport</keyword>
<keyword id="KW-0408">Iron</keyword>
<keyword id="KW-0460">Magnesium</keyword>
<keyword id="KW-0472">Membrane</keyword>
<keyword id="KW-0479">Metal-binding</keyword>
<keyword id="KW-0560">Oxidoreductase</keyword>
<keyword id="KW-0597">Phosphoprotein</keyword>
<keyword id="KW-0602">Photosynthesis</keyword>
<keyword id="KW-0604">Photosystem II</keyword>
<keyword id="KW-0934">Plastid</keyword>
<keyword id="KW-0793">Thylakoid</keyword>
<keyword id="KW-0812">Transmembrane</keyword>
<keyword id="KW-1133">Transmembrane helix</keyword>
<keyword id="KW-0813">Transport</keyword>
<sequence length="353" mass="39547">MTIALGKFTKDEKDLFDIMDDWLRRDRFVFVGWSGLLLFPCAYFALGGWFTGTTFVTSWYTHGLASSYLEGCNFLTAAVSTPANSLAHSLLLLWGPKAQGDFTRWCQLGGLWAFVALHGAFALIGFMLRQFELARSVQLRPYNAIAFSGPIAVFVSVFLIYPLGQSGWFFAPSFGVAAIFRFILFFQGFHNWTLNPFHMMGVAGVLGAALLCAIHGATVENTLFEDGDGANTFRAFNPTQAEETYSMVTANRFWSQIFGVAFSNKRWLHFFMLFVPVTGLWMSALGVVGLALNLRAYDFVSQEIRAAEDPEFETFYTKNILLNEGIRAWMAAQDQPHENLIFPEEVLPRGNAL</sequence>
<name>PSBD_BARVE</name>
<proteinExistence type="inferred from homology"/>
<reference key="1">
    <citation type="submission" date="2007-03" db="EMBL/GenBank/DDBJ databases">
        <title>Sequencing analysis of Barbarea verna chloroplast DNA.</title>
        <authorList>
            <person name="Hosouchi T."/>
            <person name="Tsuruoka H."/>
            <person name="Kotani H."/>
        </authorList>
    </citation>
    <scope>NUCLEOTIDE SEQUENCE [LARGE SCALE GENOMIC DNA]</scope>
</reference>